<organism>
    <name type="scientific">Cricetulus griseus</name>
    <name type="common">Chinese hamster</name>
    <name type="synonym">Cricetulus barabensis griseus</name>
    <dbReference type="NCBI Taxonomy" id="10029"/>
    <lineage>
        <taxon>Eukaryota</taxon>
        <taxon>Metazoa</taxon>
        <taxon>Chordata</taxon>
        <taxon>Craniata</taxon>
        <taxon>Vertebrata</taxon>
        <taxon>Euteleostomi</taxon>
        <taxon>Mammalia</taxon>
        <taxon>Eutheria</taxon>
        <taxon>Euarchontoglires</taxon>
        <taxon>Glires</taxon>
        <taxon>Rodentia</taxon>
        <taxon>Myomorpha</taxon>
        <taxon>Muroidea</taxon>
        <taxon>Cricetidae</taxon>
        <taxon>Cricetinae</taxon>
        <taxon>Cricetulus</taxon>
    </lineage>
</organism>
<comment type="function">
    <text evidence="2 3">Heterotrimeric guanine nucleotide-binding proteins (G proteins) function as transducers downstream of G protein-coupled receptors (GPCRs) in numerous signaling cascades. The alpha chain contains the guanine nucleotide binding site and alternates between an active, GTP-bound state and an inactive, GDP-bound state. Signaling by an activated GPCR promotes GDP release and GTP binding. The alpha subunit has a low GTPase activity that converts bound GTP to GDP, thereby terminating the signal (By similarity). Both GDP release and GTP hydrolysis are modulated by numerous regulatory proteins (By similarity). Signaling is mediated via effector proteins, such as adenylate cyclase. Inhibits adenylate cyclase activity, leading to decreased intracellular cAMP levels (By similarity). Stimulates the activity of receptor-regulated K(+) channels (By similarity). The active GTP-bound form prevents the association of RGS14 with centrosomes and is required for the translocation of RGS14 from the cytoplasm to the plasma membrane. May play a role in cell division (By similarity). The active GTP-bound form activates the calcium permeant TRPC5 ion channels (By similarity).</text>
</comment>
<comment type="subunit">
    <text evidence="2 3 4">Heterotrimeric G proteins are composed of 3 units; alpha, beta and gamma. The alpha subunit contains the guanine nucleotide binding site (By similarity). GTP binding causes dissociation of the heterotrimer, liberating the individual subunits so that they can interact with downstream effector proteins. Forms a complex with CCDC88A/GIV and EGFR which leads to enhanced EGFR signaling and triggering of cell migration; ligand stimulation is required for recruitment of GNAI3 to the complex (By similarity). Interacts (inactive GDP-bound form) with CCDC88A/GIV (via GBA motif); the interaction leads to activation of GNAI3 (By similarity). Interacts (inactive GDP-bound form) with CCDC88C/DAPLE (via GBA motif); the interaction leads to activation of GNAI3 (By similarity). Interacts (inactive GDP-bound form) with NUCB1 (via GBA motif) and NUCB2 (via GBA motif); the interaction leads to activation of GNAI3 (By similarity). Interacts (inactive GDP-bound form) with PLCD4 (via GBA motif); the interaction leads to activation of GNAI3 (By similarity). Interacts with INSR; the interaction is probably mediated by CCDC88A/GIV (By similarity). Interacts with GPSM1 (By similarity). Interacts (GDP-bound form) with GPSM2 (via GoLoco domains) (By similarity). Does not interact with RGS2 (By similarity). Interacts with RGS8 and RGS10; this strongly enhances the intrinsic GTPase activity (By similarity). Interacts with RGS16; this strongly enhances the intrinsic GTPase activity (By similarity). Interacts with RGS12 (By similarity). Interacts (via active GTP- or inactive GDP-bound form) with RGS14 (By similarity). Interacts (via active GTP-bound form) with TRPC5 (via ANK repeats) in a homotetrameric ion channel; the interaction is direct and activates the channel activity (By similarity).</text>
</comment>
<comment type="subcellular location">
    <subcellularLocation>
        <location evidence="3">Cytoplasm</location>
    </subcellularLocation>
    <subcellularLocation>
        <location evidence="3">Cell membrane</location>
        <topology evidence="6">Lipid-anchor</topology>
    </subcellularLocation>
    <subcellularLocation>
        <location evidence="3">Cytoplasm</location>
        <location evidence="3">Cytoskeleton</location>
        <location evidence="3">Microtubule organizing center</location>
        <location evidence="3">Centrosome</location>
    </subcellularLocation>
    <text evidence="3">Localizes in the centrosomes of interphase and mitotic cells. Detected at the cleavage furrow and/or the midbody.</text>
</comment>
<comment type="similarity">
    <text evidence="6">Belongs to the G-alpha family. G(i/o/t/z) subfamily.</text>
</comment>
<gene>
    <name type="primary">GNAI3</name>
</gene>
<dbReference type="EMBL" id="DQ202703">
    <property type="protein sequence ID" value="ABA77545.1"/>
    <property type="molecule type" value="mRNA"/>
</dbReference>
<dbReference type="EMBL" id="JH001418">
    <property type="protein sequence ID" value="EGW10022.1"/>
    <property type="molecule type" value="Genomic_DNA"/>
</dbReference>
<dbReference type="EMBL" id="KE665493">
    <property type="protein sequence ID" value="ERE88707.1"/>
    <property type="molecule type" value="Genomic_DNA"/>
</dbReference>
<dbReference type="EMBL" id="X79282">
    <property type="protein sequence ID" value="CAA55869.1"/>
    <property type="molecule type" value="Genomic_DNA"/>
</dbReference>
<dbReference type="PIR" id="I48071">
    <property type="entry name" value="I48071"/>
</dbReference>
<dbReference type="RefSeq" id="NP_001230987.1">
    <property type="nucleotide sequence ID" value="NM_001244058.1"/>
</dbReference>
<dbReference type="RefSeq" id="XP_016835428.1">
    <property type="nucleotide sequence ID" value="XM_016979939.1"/>
</dbReference>
<dbReference type="SMR" id="Q60397"/>
<dbReference type="FunCoup" id="Q60397">
    <property type="interactions" value="3452"/>
</dbReference>
<dbReference type="PaxDb" id="10029-NP_001230987.1"/>
<dbReference type="Ensembl" id="ENSCGRT00000001728">
    <property type="protein sequence ID" value="ENSCGRP00000001680"/>
    <property type="gene ID" value="ENSCGRG00000001269"/>
</dbReference>
<dbReference type="Ensembl" id="ENSCGRT00001019808.1">
    <property type="protein sequence ID" value="ENSCGRP00001015565.1"/>
    <property type="gene ID" value="ENSCGRG00001016145.1"/>
</dbReference>
<dbReference type="Ensembl" id="ENSCGRT00015042689">
    <property type="protein sequence ID" value="ENSCGRP00015035031"/>
    <property type="gene ID" value="ENSCGRG00015026316"/>
</dbReference>
<dbReference type="GeneID" id="100689072"/>
<dbReference type="KEGG" id="cge:100689072"/>
<dbReference type="CTD" id="2773"/>
<dbReference type="eggNOG" id="KOG0082">
    <property type="taxonomic scope" value="Eukaryota"/>
</dbReference>
<dbReference type="GeneTree" id="ENSGT00940000153567"/>
<dbReference type="OMA" id="MRIIHDV"/>
<dbReference type="OrthoDB" id="5817230at2759"/>
<dbReference type="Proteomes" id="UP000001075">
    <property type="component" value="Unassembled WGS sequence"/>
</dbReference>
<dbReference type="Proteomes" id="UP000030759">
    <property type="component" value="Unassembled WGS sequence"/>
</dbReference>
<dbReference type="Proteomes" id="UP000694386">
    <property type="component" value="Unplaced"/>
</dbReference>
<dbReference type="Proteomes" id="UP001108280">
    <property type="component" value="Chromosome 1"/>
</dbReference>
<dbReference type="GO" id="GO:0005813">
    <property type="term" value="C:centrosome"/>
    <property type="evidence" value="ECO:0000250"/>
    <property type="project" value="UniProtKB"/>
</dbReference>
<dbReference type="GO" id="GO:0005737">
    <property type="term" value="C:cytoplasm"/>
    <property type="evidence" value="ECO:0000250"/>
    <property type="project" value="UniProtKB"/>
</dbReference>
<dbReference type="GO" id="GO:0005834">
    <property type="term" value="C:heterotrimeric G-protein complex"/>
    <property type="evidence" value="ECO:0007669"/>
    <property type="project" value="TreeGrafter"/>
</dbReference>
<dbReference type="GO" id="GO:0030496">
    <property type="term" value="C:midbody"/>
    <property type="evidence" value="ECO:0000250"/>
    <property type="project" value="UniProtKB"/>
</dbReference>
<dbReference type="GO" id="GO:0005886">
    <property type="term" value="C:plasma membrane"/>
    <property type="evidence" value="ECO:0000250"/>
    <property type="project" value="UniProtKB"/>
</dbReference>
<dbReference type="GO" id="GO:0001664">
    <property type="term" value="F:G protein-coupled receptor binding"/>
    <property type="evidence" value="ECO:0007669"/>
    <property type="project" value="TreeGrafter"/>
</dbReference>
<dbReference type="GO" id="GO:0031683">
    <property type="term" value="F:G-protein beta/gamma-subunit complex binding"/>
    <property type="evidence" value="ECO:0007669"/>
    <property type="project" value="InterPro"/>
</dbReference>
<dbReference type="GO" id="GO:0019003">
    <property type="term" value="F:GDP binding"/>
    <property type="evidence" value="ECO:0000250"/>
    <property type="project" value="UniProtKB"/>
</dbReference>
<dbReference type="GO" id="GO:0005525">
    <property type="term" value="F:GTP binding"/>
    <property type="evidence" value="ECO:0007669"/>
    <property type="project" value="UniProtKB-KW"/>
</dbReference>
<dbReference type="GO" id="GO:0003924">
    <property type="term" value="F:GTPase activity"/>
    <property type="evidence" value="ECO:0000250"/>
    <property type="project" value="UniProtKB"/>
</dbReference>
<dbReference type="GO" id="GO:0007193">
    <property type="term" value="P:adenylate cyclase-inhibiting G protein-coupled receptor signaling pathway"/>
    <property type="evidence" value="ECO:0000250"/>
    <property type="project" value="UniProtKB"/>
</dbReference>
<dbReference type="GO" id="GO:0051301">
    <property type="term" value="P:cell division"/>
    <property type="evidence" value="ECO:0000250"/>
    <property type="project" value="UniProtKB"/>
</dbReference>
<dbReference type="GO" id="GO:0007212">
    <property type="term" value="P:G protein-coupled dopamine receptor signaling pathway"/>
    <property type="evidence" value="ECO:0007669"/>
    <property type="project" value="TreeGrafter"/>
</dbReference>
<dbReference type="GO" id="GO:0046039">
    <property type="term" value="P:GTP metabolic process"/>
    <property type="evidence" value="ECO:0000250"/>
    <property type="project" value="UniProtKB"/>
</dbReference>
<dbReference type="CDD" id="cd00066">
    <property type="entry name" value="G-alpha"/>
    <property type="match status" value="1"/>
</dbReference>
<dbReference type="FunFam" id="3.40.50.300:FF:004760">
    <property type="entry name" value="Guanine nucleotide-binding protein G(k) subunit alpha"/>
    <property type="match status" value="1"/>
</dbReference>
<dbReference type="Gene3D" id="3.40.50.300">
    <property type="entry name" value="P-loop containing nucleotide triphosphate hydrolases"/>
    <property type="match status" value="1"/>
</dbReference>
<dbReference type="InterPro" id="IPR001408">
    <property type="entry name" value="Gprotein_alpha_I"/>
</dbReference>
<dbReference type="InterPro" id="IPR001019">
    <property type="entry name" value="Gprotein_alpha_su"/>
</dbReference>
<dbReference type="InterPro" id="IPR027417">
    <property type="entry name" value="P-loop_NTPase"/>
</dbReference>
<dbReference type="PANTHER" id="PTHR10218">
    <property type="entry name" value="GTP-BINDING PROTEIN ALPHA SUBUNIT"/>
    <property type="match status" value="1"/>
</dbReference>
<dbReference type="PANTHER" id="PTHR10218:SF230">
    <property type="entry name" value="GUANINE NUCLEOTIDE-BINDING PROTEIN G(I) SUBUNIT ALPHA-3"/>
    <property type="match status" value="1"/>
</dbReference>
<dbReference type="Pfam" id="PF00503">
    <property type="entry name" value="G-alpha"/>
    <property type="match status" value="1"/>
</dbReference>
<dbReference type="PRINTS" id="PR00441">
    <property type="entry name" value="GPROTEINAI"/>
</dbReference>
<dbReference type="SMART" id="SM00275">
    <property type="entry name" value="G_alpha"/>
    <property type="match status" value="1"/>
</dbReference>
<dbReference type="SUPFAM" id="SSF52540">
    <property type="entry name" value="P-loop containing nucleoside triphosphate hydrolases"/>
    <property type="match status" value="1"/>
</dbReference>
<dbReference type="PROSITE" id="PS51882">
    <property type="entry name" value="G_ALPHA"/>
    <property type="match status" value="1"/>
</dbReference>
<reference key="1">
    <citation type="submission" date="2005-09" db="EMBL/GenBank/DDBJ databases">
        <title>Modulation of GPCR transduction pathways using RNA interference against G-alpha subunits.</title>
        <authorList>
            <person name="Rauly-Lestienne I."/>
            <person name="Binesse J."/>
            <person name="Lestienne F."/>
            <person name="Lauressergues E."/>
            <person name="Ailhaud M.-C."/>
            <person name="Newman-Tancredi A."/>
            <person name="Cussac D."/>
        </authorList>
    </citation>
    <scope>NUCLEOTIDE SEQUENCE [MRNA]</scope>
</reference>
<reference key="2">
    <citation type="journal article" date="2011" name="Nat. Biotechnol.">
        <title>The genomic sequence of the Chinese hamster ovary (CHO)-K1 cell line.</title>
        <authorList>
            <person name="Xu X."/>
            <person name="Nagarajan H."/>
            <person name="Lewis N.E."/>
            <person name="Pan S."/>
            <person name="Cai Z."/>
            <person name="Liu X."/>
            <person name="Chen W."/>
            <person name="Xie M."/>
            <person name="Wang W."/>
            <person name="Hammond S."/>
            <person name="Andersen M.R."/>
            <person name="Neff N."/>
            <person name="Passarelli B."/>
            <person name="Koh W."/>
            <person name="Fan H.C."/>
            <person name="Wang J."/>
            <person name="Gui Y."/>
            <person name="Lee K.H."/>
            <person name="Betenbaugh M.J."/>
            <person name="Quake S.R."/>
            <person name="Famili I."/>
            <person name="Palsson B.O."/>
            <person name="Wang J."/>
        </authorList>
    </citation>
    <scope>NUCLEOTIDE SEQUENCE [LARGE SCALE GENOMIC DNA]</scope>
    <source>
        <strain>CHO K1 cell line</strain>
    </source>
</reference>
<reference key="3">
    <citation type="journal article" date="2013" name="Nat. Biotechnol.">
        <title>Chinese hamster genome sequenced from sorted chromosomes.</title>
        <authorList>
            <person name="Brinkrolf K."/>
            <person name="Rupp O."/>
            <person name="Laux H."/>
            <person name="Kollin F."/>
            <person name="Ernst W."/>
            <person name="Linke B."/>
            <person name="Kofler R."/>
            <person name="Romand S."/>
            <person name="Hesse F."/>
            <person name="Budach W.E."/>
            <person name="Galosy S."/>
            <person name="Muller D."/>
            <person name="Noll T."/>
            <person name="Wienberg J."/>
            <person name="Jostock T."/>
            <person name="Leonard M."/>
            <person name="Grillari J."/>
            <person name="Tauch A."/>
            <person name="Goesmann A."/>
            <person name="Helk B."/>
            <person name="Mott J.E."/>
            <person name="Puhler A."/>
            <person name="Borth N."/>
        </authorList>
    </citation>
    <scope>NUCLEOTIDE SEQUENCE [LARGE SCALE GENOMIC DNA]</scope>
    <source>
        <strain>17A/GY</strain>
    </source>
</reference>
<reference key="4">
    <citation type="journal article" date="1994" name="Genomics">
        <title>The highly conserved Chinese hamster GNAI3 gene maps less than 60 kb from the AMPD2 gene and lacks the intronic U6 snRNA present in its human counterpart.</title>
        <authorList>
            <person name="Baron B."/>
            <person name="Fernandez M.A."/>
            <person name="Toledo F."/>
            <person name="le Roscouet D."/>
            <person name="Mayau V."/>
            <person name="Martin N."/>
            <person name="Buttin G."/>
            <person name="Debatisse M."/>
        </authorList>
    </citation>
    <scope>NUCLEOTIDE SEQUENCE [GENOMIC DNA] OF 292-354</scope>
</reference>
<keyword id="KW-0131">Cell cycle</keyword>
<keyword id="KW-0132">Cell division</keyword>
<keyword id="KW-1003">Cell membrane</keyword>
<keyword id="KW-0963">Cytoplasm</keyword>
<keyword id="KW-0206">Cytoskeleton</keyword>
<keyword id="KW-0342">GTP-binding</keyword>
<keyword id="KW-0449">Lipoprotein</keyword>
<keyword id="KW-0460">Magnesium</keyword>
<keyword id="KW-0472">Membrane</keyword>
<keyword id="KW-0479">Metal-binding</keyword>
<keyword id="KW-0519">Myristate</keyword>
<keyword id="KW-0547">Nucleotide-binding</keyword>
<keyword id="KW-0564">Palmitate</keyword>
<keyword id="KW-1185">Reference proteome</keyword>
<keyword id="KW-0807">Transducer</keyword>
<protein>
    <recommendedName>
        <fullName>Guanine nucleotide-binding protein G(i) subunit alpha-3</fullName>
    </recommendedName>
    <alternativeName>
        <fullName>G(i) alpha-3</fullName>
    </alternativeName>
</protein>
<evidence type="ECO:0000250" key="1"/>
<evidence type="ECO:0000250" key="2">
    <source>
        <dbReference type="UniProtKB" id="P08753"/>
    </source>
</evidence>
<evidence type="ECO:0000250" key="3">
    <source>
        <dbReference type="UniProtKB" id="P08754"/>
    </source>
</evidence>
<evidence type="ECO:0000250" key="4">
    <source>
        <dbReference type="UniProtKB" id="Q9DC51"/>
    </source>
</evidence>
<evidence type="ECO:0000255" key="5">
    <source>
        <dbReference type="PROSITE-ProRule" id="PRU01230"/>
    </source>
</evidence>
<evidence type="ECO:0000305" key="6"/>
<feature type="initiator methionine" description="Removed" evidence="3">
    <location>
        <position position="1"/>
    </location>
</feature>
<feature type="chain" id="PRO_0000203691" description="Guanine nucleotide-binding protein G(i) subunit alpha-3">
    <location>
        <begin position="2"/>
        <end position="354"/>
    </location>
</feature>
<feature type="domain" description="G-alpha" evidence="5">
    <location>
        <begin position="32"/>
        <end position="354"/>
    </location>
</feature>
<feature type="region of interest" description="G1 motif" evidence="5">
    <location>
        <begin position="35"/>
        <end position="48"/>
    </location>
</feature>
<feature type="region of interest" description="G2 motif" evidence="5">
    <location>
        <begin position="173"/>
        <end position="181"/>
    </location>
</feature>
<feature type="region of interest" description="G3 motif" evidence="5">
    <location>
        <begin position="196"/>
        <end position="205"/>
    </location>
</feature>
<feature type="region of interest" description="G4 motif" evidence="5">
    <location>
        <begin position="265"/>
        <end position="272"/>
    </location>
</feature>
<feature type="region of interest" description="G5 motif" evidence="5">
    <location>
        <begin position="324"/>
        <end position="329"/>
    </location>
</feature>
<feature type="binding site" evidence="3">
    <location>
        <position position="42"/>
    </location>
    <ligand>
        <name>GTP</name>
        <dbReference type="ChEBI" id="CHEBI:37565"/>
    </ligand>
</feature>
<feature type="binding site" evidence="3">
    <location>
        <position position="43"/>
    </location>
    <ligand>
        <name>GTP</name>
        <dbReference type="ChEBI" id="CHEBI:37565"/>
    </ligand>
</feature>
<feature type="binding site" evidence="3">
    <location>
        <position position="44"/>
    </location>
    <ligand>
        <name>GTP</name>
        <dbReference type="ChEBI" id="CHEBI:37565"/>
    </ligand>
</feature>
<feature type="binding site" evidence="3">
    <location>
        <position position="45"/>
    </location>
    <ligand>
        <name>GTP</name>
        <dbReference type="ChEBI" id="CHEBI:37565"/>
    </ligand>
</feature>
<feature type="binding site" evidence="3">
    <location>
        <position position="46"/>
    </location>
    <ligand>
        <name>GTP</name>
        <dbReference type="ChEBI" id="CHEBI:37565"/>
    </ligand>
</feature>
<feature type="binding site" evidence="3">
    <location>
        <position position="47"/>
    </location>
    <ligand>
        <name>GTP</name>
        <dbReference type="ChEBI" id="CHEBI:37565"/>
    </ligand>
</feature>
<feature type="binding site" evidence="3">
    <location>
        <position position="47"/>
    </location>
    <ligand>
        <name>Mg(2+)</name>
        <dbReference type="ChEBI" id="CHEBI:18420"/>
    </ligand>
</feature>
<feature type="binding site" evidence="3">
    <location>
        <position position="48"/>
    </location>
    <ligand>
        <name>GTP</name>
        <dbReference type="ChEBI" id="CHEBI:37565"/>
    </ligand>
</feature>
<feature type="binding site" evidence="3">
    <location>
        <position position="150"/>
    </location>
    <ligand>
        <name>GTP</name>
        <dbReference type="ChEBI" id="CHEBI:37565"/>
    </ligand>
</feature>
<feature type="binding site" evidence="3">
    <location>
        <position position="151"/>
    </location>
    <ligand>
        <name>GTP</name>
        <dbReference type="ChEBI" id="CHEBI:37565"/>
    </ligand>
</feature>
<feature type="binding site" evidence="3">
    <location>
        <position position="175"/>
    </location>
    <ligand>
        <name>GTP</name>
        <dbReference type="ChEBI" id="CHEBI:37565"/>
    </ligand>
</feature>
<feature type="binding site" evidence="3">
    <location>
        <position position="176"/>
    </location>
    <ligand>
        <name>GTP</name>
        <dbReference type="ChEBI" id="CHEBI:37565"/>
    </ligand>
</feature>
<feature type="binding site" evidence="3">
    <location>
        <position position="177"/>
    </location>
    <ligand>
        <name>GTP</name>
        <dbReference type="ChEBI" id="CHEBI:37565"/>
    </ligand>
</feature>
<feature type="binding site" evidence="3">
    <location>
        <position position="178"/>
    </location>
    <ligand>
        <name>GTP</name>
        <dbReference type="ChEBI" id="CHEBI:37565"/>
    </ligand>
</feature>
<feature type="binding site" evidence="3">
    <location>
        <position position="179"/>
    </location>
    <ligand>
        <name>GTP</name>
        <dbReference type="ChEBI" id="CHEBI:37565"/>
    </ligand>
</feature>
<feature type="binding site" evidence="3">
    <location>
        <position position="180"/>
    </location>
    <ligand>
        <name>GTP</name>
        <dbReference type="ChEBI" id="CHEBI:37565"/>
    </ligand>
</feature>
<feature type="binding site" evidence="3">
    <location>
        <position position="181"/>
    </location>
    <ligand>
        <name>GTP</name>
        <dbReference type="ChEBI" id="CHEBI:37565"/>
    </ligand>
</feature>
<feature type="binding site" evidence="3">
    <location>
        <position position="181"/>
    </location>
    <ligand>
        <name>Mg(2+)</name>
        <dbReference type="ChEBI" id="CHEBI:18420"/>
    </ligand>
</feature>
<feature type="binding site" evidence="3">
    <location>
        <position position="201"/>
    </location>
    <ligand>
        <name>GTP</name>
        <dbReference type="ChEBI" id="CHEBI:37565"/>
    </ligand>
</feature>
<feature type="binding site" evidence="3">
    <location>
        <position position="203"/>
    </location>
    <ligand>
        <name>GTP</name>
        <dbReference type="ChEBI" id="CHEBI:37565"/>
    </ligand>
</feature>
<feature type="binding site" evidence="3">
    <location>
        <position position="269"/>
    </location>
    <ligand>
        <name>GTP</name>
        <dbReference type="ChEBI" id="CHEBI:37565"/>
    </ligand>
</feature>
<feature type="binding site" evidence="3">
    <location>
        <position position="270"/>
    </location>
    <ligand>
        <name>GTP</name>
        <dbReference type="ChEBI" id="CHEBI:37565"/>
    </ligand>
</feature>
<feature type="binding site" evidence="3">
    <location>
        <position position="272"/>
    </location>
    <ligand>
        <name>GTP</name>
        <dbReference type="ChEBI" id="CHEBI:37565"/>
    </ligand>
</feature>
<feature type="binding site" evidence="3">
    <location>
        <position position="273"/>
    </location>
    <ligand>
        <name>GTP</name>
        <dbReference type="ChEBI" id="CHEBI:37565"/>
    </ligand>
</feature>
<feature type="binding site" evidence="3">
    <location>
        <position position="325"/>
    </location>
    <ligand>
        <name>GTP</name>
        <dbReference type="ChEBI" id="CHEBI:37565"/>
    </ligand>
</feature>
<feature type="binding site" evidence="3">
    <location>
        <position position="326"/>
    </location>
    <ligand>
        <name>GTP</name>
        <dbReference type="ChEBI" id="CHEBI:37565"/>
    </ligand>
</feature>
<feature type="binding site" evidence="3">
    <location>
        <position position="327"/>
    </location>
    <ligand>
        <name>GTP</name>
        <dbReference type="ChEBI" id="CHEBI:37565"/>
    </ligand>
</feature>
<feature type="lipid moiety-binding region" description="N-myristoyl glycine" evidence="3">
    <location>
        <position position="2"/>
    </location>
</feature>
<feature type="lipid moiety-binding region" description="S-palmitoyl cysteine" evidence="1">
    <location>
        <position position="3"/>
    </location>
</feature>
<sequence length="354" mass="40506">MGCTLSAEDKAAVERSKMIDRNLREDGEKAAKEVKLLLLGAGESGKSTIVKQMKIIHEDGYSEDECKQYKVVVYSNTIQSIIAIIRAMGRLKIDFGEAARADDARQLFVLAGSAEEGVMTSELAGVIKRLWRDGGVQACFGRSREYQLNDSASYYLNDLDRISQTNYIPTQQDVLRTRVKTTGIVETHFTFKELYFKMFDVGGQRSERKKWIHCFEGVTAIIFCVALSDYDLVLAEDEEMNRMHESMKLFDSICNNKWFTDTSIILFLNKKDLFEEKIKRSPLTICYPEYTGSNTYEEAAAYIQCQFEDLNRRKDTKEIYTHFTCATDTKNVQFVFDAVTDVIIKNNLKECGLY</sequence>
<proteinExistence type="evidence at transcript level"/>
<name>GNAI3_CRIGR</name>
<accession>Q60397</accession>
<accession>Q3HR12</accession>